<sequence>MNIAALLSGGVDSSVVVHLLCEQGYKPTLFYIKIGMDGAEYMDCSAEEDIEMSTAIARKYGLSLEVVDLHKEYWENVAAYAIDKIKKGLTPNPDVMCNKLIKFGCFEQQVGKNFDFTATGHYATTIRQDGKTWLGTAKDPVKDQTDFLAQIDYLQVSKLMFPIGGLMKQEVREIASRAGLPSARRKDSQGICFLGKINYNDFVRRFLGEREGAIIELETGKKVGTHRGYWFHTIGQRKGLGLSGGPWFVIKKDVEENIIYVSHGYGVETQFGSEFRINDFHFITENPWKDAGKEIDITFKIRHTPEFTKGKLVQEEGGQFRILSSEKLQGIAPGQFGVIYDEEAGICVGSGEITR</sequence>
<evidence type="ECO:0000255" key="1">
    <source>
        <dbReference type="HAMAP-Rule" id="MF_00144"/>
    </source>
</evidence>
<gene>
    <name evidence="1" type="primary">mnmA1</name>
    <name type="ordered locus">BT_0155</name>
</gene>
<reference key="1">
    <citation type="journal article" date="2003" name="Science">
        <title>A genomic view of the human-Bacteroides thetaiotaomicron symbiosis.</title>
        <authorList>
            <person name="Xu J."/>
            <person name="Bjursell M.K."/>
            <person name="Himrod J."/>
            <person name="Deng S."/>
            <person name="Carmichael L.K."/>
            <person name="Chiang H.C."/>
            <person name="Hooper L.V."/>
            <person name="Gordon J.I."/>
        </authorList>
    </citation>
    <scope>NUCLEOTIDE SEQUENCE [LARGE SCALE GENOMIC DNA]</scope>
    <source>
        <strain>ATCC 29148 / DSM 2079 / JCM 5827 / CCUG 10774 / NCTC 10582 / VPI-5482 / E50</strain>
    </source>
</reference>
<feature type="chain" id="PRO_0000349527" description="tRNA-specific 2-thiouridylase MnmA 1">
    <location>
        <begin position="1"/>
        <end position="355"/>
    </location>
</feature>
<feature type="region of interest" description="Interaction with target base in tRNA" evidence="1">
    <location>
        <begin position="92"/>
        <end position="94"/>
    </location>
</feature>
<feature type="region of interest" description="Interaction with tRNA" evidence="1">
    <location>
        <begin position="142"/>
        <end position="144"/>
    </location>
</feature>
<feature type="active site" description="Nucleophile" evidence="1">
    <location>
        <position position="97"/>
    </location>
</feature>
<feature type="active site" description="Cysteine persulfide intermediate" evidence="1">
    <location>
        <position position="192"/>
    </location>
</feature>
<feature type="binding site" evidence="1">
    <location>
        <begin position="6"/>
        <end position="13"/>
    </location>
    <ligand>
        <name>ATP</name>
        <dbReference type="ChEBI" id="CHEBI:30616"/>
    </ligand>
</feature>
<feature type="binding site" evidence="1">
    <location>
        <position position="120"/>
    </location>
    <ligand>
        <name>ATP</name>
        <dbReference type="ChEBI" id="CHEBI:30616"/>
    </ligand>
</feature>
<feature type="site" description="Interaction with tRNA" evidence="1">
    <location>
        <position position="121"/>
    </location>
</feature>
<feature type="site" description="Interaction with tRNA" evidence="1">
    <location>
        <position position="335"/>
    </location>
</feature>
<feature type="disulfide bond" description="Alternate" evidence="1">
    <location>
        <begin position="97"/>
        <end position="192"/>
    </location>
</feature>
<accession>Q8ABF5</accession>
<name>MNMA1_BACTN</name>
<organism>
    <name type="scientific">Bacteroides thetaiotaomicron (strain ATCC 29148 / DSM 2079 / JCM 5827 / CCUG 10774 / NCTC 10582 / VPI-5482 / E50)</name>
    <dbReference type="NCBI Taxonomy" id="226186"/>
    <lineage>
        <taxon>Bacteria</taxon>
        <taxon>Pseudomonadati</taxon>
        <taxon>Bacteroidota</taxon>
        <taxon>Bacteroidia</taxon>
        <taxon>Bacteroidales</taxon>
        <taxon>Bacteroidaceae</taxon>
        <taxon>Bacteroides</taxon>
    </lineage>
</organism>
<dbReference type="EC" id="2.8.1.13" evidence="1"/>
<dbReference type="EMBL" id="AE015928">
    <property type="protein sequence ID" value="AAO75262.1"/>
    <property type="molecule type" value="Genomic_DNA"/>
</dbReference>
<dbReference type="RefSeq" id="NP_809068.1">
    <property type="nucleotide sequence ID" value="NC_004663.1"/>
</dbReference>
<dbReference type="RefSeq" id="WP_011107145.1">
    <property type="nucleotide sequence ID" value="NC_004663.1"/>
</dbReference>
<dbReference type="SMR" id="Q8ABF5"/>
<dbReference type="STRING" id="226186.BT_0155"/>
<dbReference type="PaxDb" id="226186-BT_0155"/>
<dbReference type="EnsemblBacteria" id="AAO75262">
    <property type="protein sequence ID" value="AAO75262"/>
    <property type="gene ID" value="BT_0155"/>
</dbReference>
<dbReference type="GeneID" id="60926120"/>
<dbReference type="KEGG" id="bth:BT_0155"/>
<dbReference type="PATRIC" id="fig|226186.12.peg.152"/>
<dbReference type="eggNOG" id="COG0482">
    <property type="taxonomic scope" value="Bacteria"/>
</dbReference>
<dbReference type="HOGENOM" id="CLU_035188_1_0_10"/>
<dbReference type="InParanoid" id="Q8ABF5"/>
<dbReference type="OrthoDB" id="9800696at2"/>
<dbReference type="Proteomes" id="UP000001414">
    <property type="component" value="Chromosome"/>
</dbReference>
<dbReference type="GO" id="GO:0005737">
    <property type="term" value="C:cytoplasm"/>
    <property type="evidence" value="ECO:0007669"/>
    <property type="project" value="UniProtKB-SubCell"/>
</dbReference>
<dbReference type="GO" id="GO:0005524">
    <property type="term" value="F:ATP binding"/>
    <property type="evidence" value="ECO:0007669"/>
    <property type="project" value="UniProtKB-KW"/>
</dbReference>
<dbReference type="GO" id="GO:0000049">
    <property type="term" value="F:tRNA binding"/>
    <property type="evidence" value="ECO:0007669"/>
    <property type="project" value="UniProtKB-KW"/>
</dbReference>
<dbReference type="GO" id="GO:0103016">
    <property type="term" value="F:tRNA-uridine 2-sulfurtransferase activity"/>
    <property type="evidence" value="ECO:0007669"/>
    <property type="project" value="UniProtKB-EC"/>
</dbReference>
<dbReference type="GO" id="GO:0006400">
    <property type="term" value="P:tRNA modification"/>
    <property type="evidence" value="ECO:0007669"/>
    <property type="project" value="UniProtKB-UniRule"/>
</dbReference>
<dbReference type="CDD" id="cd01998">
    <property type="entry name" value="MnmA_TRMU-like"/>
    <property type="match status" value="1"/>
</dbReference>
<dbReference type="FunFam" id="2.30.30.280:FF:000001">
    <property type="entry name" value="tRNA-specific 2-thiouridylase MnmA"/>
    <property type="match status" value="1"/>
</dbReference>
<dbReference type="Gene3D" id="2.30.30.280">
    <property type="entry name" value="Adenine nucleotide alpha hydrolases-like domains"/>
    <property type="match status" value="1"/>
</dbReference>
<dbReference type="Gene3D" id="3.40.50.620">
    <property type="entry name" value="HUPs"/>
    <property type="match status" value="1"/>
</dbReference>
<dbReference type="Gene3D" id="2.40.30.10">
    <property type="entry name" value="Translation factors"/>
    <property type="match status" value="1"/>
</dbReference>
<dbReference type="HAMAP" id="MF_00144">
    <property type="entry name" value="tRNA_thiouridyl_MnmA"/>
    <property type="match status" value="1"/>
</dbReference>
<dbReference type="InterPro" id="IPR004506">
    <property type="entry name" value="MnmA-like"/>
</dbReference>
<dbReference type="InterPro" id="IPR046885">
    <property type="entry name" value="MnmA-like_C"/>
</dbReference>
<dbReference type="InterPro" id="IPR046884">
    <property type="entry name" value="MnmA-like_central"/>
</dbReference>
<dbReference type="InterPro" id="IPR023382">
    <property type="entry name" value="MnmA-like_central_sf"/>
</dbReference>
<dbReference type="InterPro" id="IPR014729">
    <property type="entry name" value="Rossmann-like_a/b/a_fold"/>
</dbReference>
<dbReference type="InterPro" id="IPR051305">
    <property type="entry name" value="tRNA_2-thiouridylase_MnmA"/>
</dbReference>
<dbReference type="NCBIfam" id="NF001138">
    <property type="entry name" value="PRK00143.1"/>
    <property type="match status" value="1"/>
</dbReference>
<dbReference type="NCBIfam" id="TIGR00420">
    <property type="entry name" value="trmU"/>
    <property type="match status" value="1"/>
</dbReference>
<dbReference type="PANTHER" id="PTHR43052">
    <property type="match status" value="1"/>
</dbReference>
<dbReference type="PANTHER" id="PTHR43052:SF1">
    <property type="entry name" value="TRNA-5-TAURINOMETHYLURIDINE 2-SULFURTRANSFERASE"/>
    <property type="match status" value="1"/>
</dbReference>
<dbReference type="Pfam" id="PF03054">
    <property type="entry name" value="tRNA_Me_trans"/>
    <property type="match status" value="1"/>
</dbReference>
<dbReference type="Pfam" id="PF20258">
    <property type="entry name" value="tRNA_Me_trans_C"/>
    <property type="match status" value="1"/>
</dbReference>
<dbReference type="Pfam" id="PF20259">
    <property type="entry name" value="tRNA_Me_trans_M"/>
    <property type="match status" value="1"/>
</dbReference>
<dbReference type="SUPFAM" id="SSF52402">
    <property type="entry name" value="Adenine nucleotide alpha hydrolases-like"/>
    <property type="match status" value="1"/>
</dbReference>
<protein>
    <recommendedName>
        <fullName evidence="1">tRNA-specific 2-thiouridylase MnmA 1</fullName>
        <ecNumber evidence="1">2.8.1.13</ecNumber>
    </recommendedName>
</protein>
<proteinExistence type="inferred from homology"/>
<keyword id="KW-0067">ATP-binding</keyword>
<keyword id="KW-0963">Cytoplasm</keyword>
<keyword id="KW-1015">Disulfide bond</keyword>
<keyword id="KW-0547">Nucleotide-binding</keyword>
<keyword id="KW-1185">Reference proteome</keyword>
<keyword id="KW-0694">RNA-binding</keyword>
<keyword id="KW-0808">Transferase</keyword>
<keyword id="KW-0819">tRNA processing</keyword>
<keyword id="KW-0820">tRNA-binding</keyword>
<comment type="function">
    <text evidence="1">Catalyzes the 2-thiolation of uridine at the wobble position (U34) of tRNA, leading to the formation of s(2)U34.</text>
</comment>
<comment type="catalytic activity">
    <reaction evidence="1">
        <text>S-sulfanyl-L-cysteinyl-[protein] + uridine(34) in tRNA + AH2 + ATP = 2-thiouridine(34) in tRNA + L-cysteinyl-[protein] + A + AMP + diphosphate + H(+)</text>
        <dbReference type="Rhea" id="RHEA:47032"/>
        <dbReference type="Rhea" id="RHEA-COMP:10131"/>
        <dbReference type="Rhea" id="RHEA-COMP:11726"/>
        <dbReference type="Rhea" id="RHEA-COMP:11727"/>
        <dbReference type="Rhea" id="RHEA-COMP:11728"/>
        <dbReference type="ChEBI" id="CHEBI:13193"/>
        <dbReference type="ChEBI" id="CHEBI:15378"/>
        <dbReference type="ChEBI" id="CHEBI:17499"/>
        <dbReference type="ChEBI" id="CHEBI:29950"/>
        <dbReference type="ChEBI" id="CHEBI:30616"/>
        <dbReference type="ChEBI" id="CHEBI:33019"/>
        <dbReference type="ChEBI" id="CHEBI:61963"/>
        <dbReference type="ChEBI" id="CHEBI:65315"/>
        <dbReference type="ChEBI" id="CHEBI:87170"/>
        <dbReference type="ChEBI" id="CHEBI:456215"/>
        <dbReference type="EC" id="2.8.1.13"/>
    </reaction>
</comment>
<comment type="subcellular location">
    <subcellularLocation>
        <location evidence="1">Cytoplasm</location>
    </subcellularLocation>
</comment>
<comment type="similarity">
    <text evidence="1">Belongs to the MnmA/TRMU family.</text>
</comment>